<dbReference type="EMBL" id="CH476659">
    <property type="protein sequence ID" value="EDN08702.1"/>
    <property type="molecule type" value="Genomic_DNA"/>
</dbReference>
<dbReference type="STRING" id="339724.A6R6E3"/>
<dbReference type="KEGG" id="aje:HCAG_05201"/>
<dbReference type="VEuPathDB" id="FungiDB:HCAG_05201"/>
<dbReference type="HOGENOM" id="CLU_000626_1_0_1"/>
<dbReference type="OMA" id="AVWKRAP"/>
<dbReference type="OrthoDB" id="6621at299071"/>
<dbReference type="Proteomes" id="UP000009297">
    <property type="component" value="Unassembled WGS sequence"/>
</dbReference>
<dbReference type="GO" id="GO:0005789">
    <property type="term" value="C:endoplasmic reticulum membrane"/>
    <property type="evidence" value="ECO:0007669"/>
    <property type="project" value="UniProtKB-SubCell"/>
</dbReference>
<dbReference type="GO" id="GO:0061908">
    <property type="term" value="C:phagophore"/>
    <property type="evidence" value="ECO:0007669"/>
    <property type="project" value="TreeGrafter"/>
</dbReference>
<dbReference type="GO" id="GO:0034045">
    <property type="term" value="C:phagophore assembly site membrane"/>
    <property type="evidence" value="ECO:0007669"/>
    <property type="project" value="UniProtKB-SubCell"/>
</dbReference>
<dbReference type="GO" id="GO:0032266">
    <property type="term" value="F:phosphatidylinositol-3-phosphate binding"/>
    <property type="evidence" value="ECO:0007669"/>
    <property type="project" value="TreeGrafter"/>
</dbReference>
<dbReference type="GO" id="GO:0043495">
    <property type="term" value="F:protein-membrane adaptor activity"/>
    <property type="evidence" value="ECO:0007669"/>
    <property type="project" value="TreeGrafter"/>
</dbReference>
<dbReference type="GO" id="GO:0000045">
    <property type="term" value="P:autophagosome assembly"/>
    <property type="evidence" value="ECO:0007669"/>
    <property type="project" value="TreeGrafter"/>
</dbReference>
<dbReference type="GO" id="GO:0000422">
    <property type="term" value="P:autophagy of mitochondrion"/>
    <property type="evidence" value="ECO:0007669"/>
    <property type="project" value="TreeGrafter"/>
</dbReference>
<dbReference type="GO" id="GO:0061723">
    <property type="term" value="P:glycophagy"/>
    <property type="evidence" value="ECO:0007669"/>
    <property type="project" value="TreeGrafter"/>
</dbReference>
<dbReference type="GO" id="GO:0006869">
    <property type="term" value="P:lipid transport"/>
    <property type="evidence" value="ECO:0007669"/>
    <property type="project" value="UniProtKB-KW"/>
</dbReference>
<dbReference type="GO" id="GO:0034727">
    <property type="term" value="P:piecemeal microautophagy of the nucleus"/>
    <property type="evidence" value="ECO:0007669"/>
    <property type="project" value="TreeGrafter"/>
</dbReference>
<dbReference type="GO" id="GO:0015031">
    <property type="term" value="P:protein transport"/>
    <property type="evidence" value="ECO:0007669"/>
    <property type="project" value="UniProtKB-KW"/>
</dbReference>
<dbReference type="GO" id="GO:0061709">
    <property type="term" value="P:reticulophagy"/>
    <property type="evidence" value="ECO:0007669"/>
    <property type="project" value="TreeGrafter"/>
</dbReference>
<dbReference type="InterPro" id="IPR026849">
    <property type="entry name" value="ATG2"/>
</dbReference>
<dbReference type="PANTHER" id="PTHR13190">
    <property type="entry name" value="AUTOPHAGY-RELATED 2, ISOFORM A"/>
    <property type="match status" value="1"/>
</dbReference>
<dbReference type="PANTHER" id="PTHR13190:SF1">
    <property type="entry name" value="AUTOPHAGY-RELATED 2, ISOFORM A"/>
    <property type="match status" value="1"/>
</dbReference>
<dbReference type="Pfam" id="PF13329">
    <property type="entry name" value="ATG2_CAD"/>
    <property type="match status" value="2"/>
</dbReference>
<name>ATG2_AJECN</name>
<evidence type="ECO:0000250" key="1">
    <source>
        <dbReference type="UniProtKB" id="O94649"/>
    </source>
</evidence>
<evidence type="ECO:0000250" key="2">
    <source>
        <dbReference type="UniProtKB" id="P53855"/>
    </source>
</evidence>
<evidence type="ECO:0000256" key="3">
    <source>
        <dbReference type="SAM" id="MobiDB-lite"/>
    </source>
</evidence>
<evidence type="ECO:0000305" key="4"/>
<protein>
    <recommendedName>
        <fullName>Autophagy-related protein 2</fullName>
    </recommendedName>
</protein>
<reference key="1">
    <citation type="journal article" date="2009" name="Genome Res.">
        <title>Comparative genomic analyses of the human fungal pathogens Coccidioides and their relatives.</title>
        <authorList>
            <person name="Sharpton T.J."/>
            <person name="Stajich J.E."/>
            <person name="Rounsley S.D."/>
            <person name="Gardner M.J."/>
            <person name="Wortman J.R."/>
            <person name="Jordar V.S."/>
            <person name="Maiti R."/>
            <person name="Kodira C.D."/>
            <person name="Neafsey D.E."/>
            <person name="Zeng Q."/>
            <person name="Hung C.-Y."/>
            <person name="McMahan C."/>
            <person name="Muszewska A."/>
            <person name="Grynberg M."/>
            <person name="Mandel M.A."/>
            <person name="Kellner E.M."/>
            <person name="Barker B.M."/>
            <person name="Galgiani J.N."/>
            <person name="Orbach M.J."/>
            <person name="Kirkland T.N."/>
            <person name="Cole G.T."/>
            <person name="Henn M.R."/>
            <person name="Birren B.W."/>
            <person name="Taylor J.W."/>
        </authorList>
    </citation>
    <scope>NUCLEOTIDE SEQUENCE [LARGE SCALE GENOMIC DNA]</scope>
    <source>
        <strain>NAm1 / WU24</strain>
    </source>
</reference>
<accession>A6R6E3</accession>
<sequence length="2105" mass="230425">MSYFLPSFFQKRLLRYALSRLELVDTDALDLESLGITWGQRSTFELRDIGLRLEKLSSVLQLPPSCKLTQATVSLIHVTIPADIYSSSIVVEVENVQVKLKLLSDDAASSGDDRELCRPFDELSNNPKANDPHPPGSHSHDRSSEKSSILPSTTDLAQSFLESEPKEEKAELEAAISSQSQYSQCSDGLSDDGEEELGIGVEDGMSLPGFVAGFFQGVADRLQLKVKDVVFKIDMEVGHDRTSNSPQDLTVDTVTAMFTIQNISIDSVVSPMEENPELKPGKRFISFSQINLIFLADAGVFSNYSHFVPPSLKSPSVTHSTRSIHSKLSHSPLNVSSPAPTSSSSGSSLVMSRGTILDQPSLLEDRPSNHQLADSVYTDDGRFSDAGTEYEYGAGSYLDHTRPMTENHYDENILDNPIYLDEAIRSNLADEFQSSPPSISDPTDPTDEPSGDTPRPRSPTSLPDDHMYHSMESSTHSTNHPSQHLEIPPVEYQPEFSEPSGDEIEVSDSDNVPCTQEPSRSGSSTPQRSHSESASVVEDLSKSKIFTHEEATSIYMSVLSSISAGSLPDMPGGWESPKYEASKRNVSSPSLAPSTDVEPTSTTSEGTPKAKPLVQLENGETRDTSHVLGSPLLSNPNQSGLTEAEIKSPSRSPDYIPRIAKRVFEIDKLAVWLPSLDPKITKSQDVPTQNSPRNEFDHMETSTMSFTDSATDEEPVSLSQHLAFQQPRRELIFSQSLHQLASPEQDDTSVPGFYAGTILVDVPTITIEVDIACGWLLTMMGQRLVSTWNPTTQNEKCRSESKHATILPLNLTLANCSIRFLEHLPIYRSAFNATSLHYNPEVSEIILRVTLSGINFKSSVRGDTSEFILNVTKLTFGHASEDIISFDDGLKMRDSIRDDFHLKRGDISLSVLSTKGNTTVDLATLPVHFSFNLQRLDETLNWFGGLSTILELGNSISSTSTIKGGKVAANQRPRGVHFEVDSSKARPLPVGSSGVNPIPWKINARMKGFVMTLQGDRCSLKLKTTAVKIFMFAPMEEDLDRLLLLLTPSKDRYGEDDDIMLDTLFRQRKQGAVLRLTVGNLKADFPEPEMLRPLSSLGNELAKLSTVTKYLPQDDRPGILTLVLVQECSCGVALGGRIGDIEISLTGVEAAHVGIPSLMAARVSTLVVSRNDDEELVGEAANSQDETNIVALPMIMARFIADEMDPTVKIKLSNVRFEYTVPSIVAFLGLDNDMSAEDFAANIANSVVNLAELKSQETTIHRLAESSMSSVSSRPSPVPSKLSITLRDCLVGLNPRKSPARGIAVFTSAKFSGSLDKDVTLDACLEIQKATVMIINDSRNVGTRGSSHTRTSSDSQSNQVQLLHGMGYVPVCYLSSAAVVVKVMQLDDNGEKSVDVEVRDDLLILETCADSTQTLITILNELAPPSPPNKSLKYRTEVMPIDDMLSSFTGNAFETSPIREVGNLSNSYPVDEKEGDLAEELEYVSDFYPVTLESGKHDPGRNMHISGTSDADDGLSGLAHGPKTLLESFYSEAHVSSSVSSLDFQEDHFARKSAVGGTAHRWDSTYNTYALTNDAKLHGSPLRVRVRDVHFIWNLFDGFDWQHTRDAISKAVKDVEAKASEKFSRVGGRSSPQMGSEEDVIGDFLFNSIYIGIPSNRNPQQLREDINAHIDDLASETGSFATTTTMTDGSAATIKAPSKRSKKLRLNRSKRQKMTFELKGISADLVVFPPGSGETQSSLDIRVNDLEIFDHVPSSNWRKFATYMYDAGEKENGTAELAASEIILKATILPLRLHVDQDALDFMTRFFEFKDDSAPADTSPTEQPFLQRVEVNAVRVRLDFKPKRVDYGSLRSGRTTEFMNFFVLEEADMVLRHVIIYGVSGFEKLGVTLNDIWMPDIKANQLPGVLAGLAPIKSLVGVGSGFKDLVVIPMREYKKDGRIVRSIQKGALAFAKTTTNELVKLGAKLAIGTQTVLQGTEDFLNAPGDVGSQRYVATTDDDSADEEQQKQFSPYADQPVGVVQGLRGAYASLERDLLIARNAIVAVPGEVIESGSAQGAARALLKRAPTVILRPAIGASKALGQTLLGAGNSLDPTNRRRVEDKYKRH</sequence>
<feature type="chain" id="PRO_0000317801" description="Autophagy-related protein 2">
    <location>
        <begin position="1"/>
        <end position="2105"/>
    </location>
</feature>
<feature type="region of interest" description="Disordered" evidence="3">
    <location>
        <begin position="108"/>
        <end position="199"/>
    </location>
</feature>
<feature type="region of interest" description="Disordered" evidence="3">
    <location>
        <begin position="312"/>
        <end position="384"/>
    </location>
</feature>
<feature type="region of interest" description="Disordered" evidence="3">
    <location>
        <begin position="432"/>
        <end position="538"/>
    </location>
</feature>
<feature type="region of interest" description="Disordered" evidence="3">
    <location>
        <begin position="573"/>
        <end position="650"/>
    </location>
</feature>
<feature type="region of interest" description="Disordered" evidence="3">
    <location>
        <begin position="2086"/>
        <end position="2105"/>
    </location>
</feature>
<feature type="compositionally biased region" description="Basic and acidic residues" evidence="3">
    <location>
        <begin position="111"/>
        <end position="121"/>
    </location>
</feature>
<feature type="compositionally biased region" description="Basic and acidic residues" evidence="3">
    <location>
        <begin position="163"/>
        <end position="172"/>
    </location>
</feature>
<feature type="compositionally biased region" description="Low complexity" evidence="3">
    <location>
        <begin position="336"/>
        <end position="352"/>
    </location>
</feature>
<feature type="compositionally biased region" description="Low complexity" evidence="3">
    <location>
        <begin position="434"/>
        <end position="443"/>
    </location>
</feature>
<feature type="compositionally biased region" description="Polar residues" evidence="3">
    <location>
        <begin position="471"/>
        <end position="482"/>
    </location>
</feature>
<feature type="compositionally biased region" description="Polar residues" evidence="3">
    <location>
        <begin position="509"/>
        <end position="534"/>
    </location>
</feature>
<feature type="compositionally biased region" description="Polar residues" evidence="3">
    <location>
        <begin position="584"/>
        <end position="606"/>
    </location>
</feature>
<feature type="compositionally biased region" description="Polar residues" evidence="3">
    <location>
        <begin position="632"/>
        <end position="641"/>
    </location>
</feature>
<feature type="compositionally biased region" description="Basic and acidic residues" evidence="3">
    <location>
        <begin position="2093"/>
        <end position="2105"/>
    </location>
</feature>
<comment type="function">
    <text evidence="2">Lipid transfer protein required for autophagosome completion and peroxisome degradation. Tethers the edge of the isolation membrane (IM) to the endoplasmic reticulum (ER) and mediates direct lipid transfer from ER to IM for IM expansion. ATG2 binds to the ER exit site (ERES), which is the membrane source for autophagosome formation, using basic residues in its N-terminal region (NR) and to the expanding edge of the IM through its C-terminal region. The latter binding is assisted by an ATG18-PtdIns3P interaction. ATG2 then extracts phospholipids from the membrane source using its NR and transfers them to ATG9 to the IM through its predicted beta-sheet-rich structure for membrane expansion.</text>
</comment>
<comment type="catalytic activity">
    <reaction evidence="1">
        <text>a 1,2-diacyl-sn-glycero-3-phosphocholine(in) = a 1,2-diacyl-sn-glycero-3-phosphocholine(out)</text>
        <dbReference type="Rhea" id="RHEA:38571"/>
        <dbReference type="ChEBI" id="CHEBI:57643"/>
    </reaction>
</comment>
<comment type="catalytic activity">
    <reaction evidence="1">
        <text>a 1,2-diacyl-sn-glycero-3-phospho-L-serine(in) = a 1,2-diacyl-sn-glycero-3-phospho-L-serine(out)</text>
        <dbReference type="Rhea" id="RHEA:38663"/>
        <dbReference type="ChEBI" id="CHEBI:57262"/>
    </reaction>
</comment>
<comment type="catalytic activity">
    <reaction evidence="1">
        <text>a 1,2-diacyl-sn-glycero-3-phosphoethanolamine(in) = a 1,2-diacyl-sn-glycero-3-phosphoethanolamine(out)</text>
        <dbReference type="Rhea" id="RHEA:38895"/>
        <dbReference type="ChEBI" id="CHEBI:64612"/>
    </reaction>
</comment>
<comment type="subcellular location">
    <subcellularLocation>
        <location evidence="2">Preautophagosomal structure membrane</location>
        <topology evidence="2">Peripheral membrane protein</topology>
    </subcellularLocation>
    <subcellularLocation>
        <location evidence="2">Endoplasmic reticulum membrane</location>
        <topology evidence="2">Peripheral membrane protein</topology>
    </subcellularLocation>
</comment>
<comment type="similarity">
    <text evidence="4">Belongs to the ATG2 family.</text>
</comment>
<gene>
    <name type="primary">ATG2</name>
    <name type="ORF">HCAG_05201</name>
</gene>
<proteinExistence type="inferred from homology"/>
<keyword id="KW-0072">Autophagy</keyword>
<keyword id="KW-0256">Endoplasmic reticulum</keyword>
<keyword id="KW-0445">Lipid transport</keyword>
<keyword id="KW-0472">Membrane</keyword>
<keyword id="KW-0653">Protein transport</keyword>
<keyword id="KW-1185">Reference proteome</keyword>
<keyword id="KW-0813">Transport</keyword>
<organism>
    <name type="scientific">Ajellomyces capsulatus (strain NAm1 / WU24)</name>
    <name type="common">Darling's disease fungus</name>
    <name type="synonym">Histoplasma capsulatum</name>
    <dbReference type="NCBI Taxonomy" id="2059318"/>
    <lineage>
        <taxon>Eukaryota</taxon>
        <taxon>Fungi</taxon>
        <taxon>Dikarya</taxon>
        <taxon>Ascomycota</taxon>
        <taxon>Pezizomycotina</taxon>
        <taxon>Eurotiomycetes</taxon>
        <taxon>Eurotiomycetidae</taxon>
        <taxon>Onygenales</taxon>
        <taxon>Ajellomycetaceae</taxon>
        <taxon>Histoplasma</taxon>
    </lineage>
</organism>